<dbReference type="EMBL" id="AF464001">
    <property type="protein sequence ID" value="AAL68841.1"/>
    <property type="molecule type" value="mRNA"/>
</dbReference>
<dbReference type="RefSeq" id="NP_001272613.1">
    <property type="nucleotide sequence ID" value="NM_001285684.1"/>
</dbReference>
<dbReference type="SMR" id="Q8WMW8"/>
<dbReference type="STRING" id="9925.ENSCHIP00000019012"/>
<dbReference type="GlyCosmos" id="Q8WMW8">
    <property type="glycosylation" value="2 sites, No reported glycans"/>
</dbReference>
<dbReference type="GeneID" id="100860817"/>
<dbReference type="CTD" id="1081"/>
<dbReference type="Proteomes" id="UP000291000">
    <property type="component" value="Unassembled WGS sequence"/>
</dbReference>
<dbReference type="Proteomes" id="UP000694566">
    <property type="component" value="Unplaced"/>
</dbReference>
<dbReference type="GO" id="GO:0005615">
    <property type="term" value="C:extracellular space"/>
    <property type="evidence" value="ECO:0000250"/>
    <property type="project" value="UniProtKB"/>
</dbReference>
<dbReference type="GO" id="GO:0016914">
    <property type="term" value="C:follicle-stimulating hormone complex"/>
    <property type="evidence" value="ECO:0000250"/>
    <property type="project" value="UniProtKB"/>
</dbReference>
<dbReference type="GO" id="GO:0016913">
    <property type="term" value="F:follicle-stimulating hormone activity"/>
    <property type="evidence" value="ECO:0000250"/>
    <property type="project" value="UniProtKB"/>
</dbReference>
<dbReference type="GO" id="GO:0007186">
    <property type="term" value="P:G protein-coupled receptor signaling pathway"/>
    <property type="evidence" value="ECO:0000250"/>
    <property type="project" value="UniProtKB"/>
</dbReference>
<dbReference type="GO" id="GO:0010893">
    <property type="term" value="P:positive regulation of steroid biosynthetic process"/>
    <property type="evidence" value="ECO:0000250"/>
    <property type="project" value="UniProtKB"/>
</dbReference>
<dbReference type="GO" id="GO:0010469">
    <property type="term" value="P:regulation of signaling receptor activity"/>
    <property type="evidence" value="ECO:0000250"/>
    <property type="project" value="UniProtKB"/>
</dbReference>
<dbReference type="GO" id="GO:0006590">
    <property type="term" value="P:thyroid hormone generation"/>
    <property type="evidence" value="ECO:0007669"/>
    <property type="project" value="TreeGrafter"/>
</dbReference>
<dbReference type="FunFam" id="2.10.90.10:FF:000011">
    <property type="entry name" value="Glycoprotein hormones alpha chain"/>
    <property type="match status" value="1"/>
</dbReference>
<dbReference type="Gene3D" id="2.10.90.10">
    <property type="entry name" value="Cystine-knot cytokines"/>
    <property type="match status" value="1"/>
</dbReference>
<dbReference type="InterPro" id="IPR029034">
    <property type="entry name" value="Cystine-knot_cytokine"/>
</dbReference>
<dbReference type="InterPro" id="IPR000476">
    <property type="entry name" value="Glyco_hormone"/>
</dbReference>
<dbReference type="PANTHER" id="PTHR11509">
    <property type="entry name" value="GLYCOPROTEIN HORMONE ALPHA CHAIN"/>
    <property type="match status" value="1"/>
</dbReference>
<dbReference type="PANTHER" id="PTHR11509:SF0">
    <property type="entry name" value="GLYCOPROTEIN HORMONES ALPHA CHAIN"/>
    <property type="match status" value="1"/>
</dbReference>
<dbReference type="Pfam" id="PF00236">
    <property type="entry name" value="Hormone_6"/>
    <property type="match status" value="1"/>
</dbReference>
<dbReference type="PRINTS" id="PR00274">
    <property type="entry name" value="GLYCOHORMONE"/>
</dbReference>
<dbReference type="SMART" id="SM00067">
    <property type="entry name" value="GHA"/>
    <property type="match status" value="1"/>
</dbReference>
<dbReference type="SUPFAM" id="SSF57501">
    <property type="entry name" value="Cystine-knot cytokines"/>
    <property type="match status" value="1"/>
</dbReference>
<dbReference type="PROSITE" id="PS00779">
    <property type="entry name" value="GLYCO_HORMONE_ALPHA_1"/>
    <property type="match status" value="1"/>
</dbReference>
<dbReference type="PROSITE" id="PS00780">
    <property type="entry name" value="GLYCO_HORMONE_ALPHA_2"/>
    <property type="match status" value="1"/>
</dbReference>
<dbReference type="PROSITE" id="PS50277">
    <property type="entry name" value="GLYCO_HORMONE_ALPHA_3"/>
    <property type="match status" value="1"/>
</dbReference>
<accession>Q8WMW8</accession>
<protein>
    <recommendedName>
        <fullName>Glycoprotein hormones alpha chain</fullName>
    </recommendedName>
    <alternativeName>
        <fullName>Anterior pituitary glycoprotein hormones common subunit alpha</fullName>
    </alternativeName>
    <alternativeName>
        <fullName>Follicle-stimulating hormone alpha chain</fullName>
        <shortName>FSH-alpha</shortName>
    </alternativeName>
    <alternativeName>
        <fullName>Follitropin alpha chain</fullName>
    </alternativeName>
    <alternativeName>
        <fullName>Luteinizing hormone alpha chain</fullName>
        <shortName>LSH-alpha</shortName>
    </alternativeName>
    <alternativeName>
        <fullName>Lutropin alpha chain</fullName>
    </alternativeName>
    <alternativeName>
        <fullName>Thyroid-stimulating hormone alpha chain</fullName>
        <shortName>TSH-alpha</shortName>
    </alternativeName>
    <alternativeName>
        <fullName>Thyrotropin alpha chain</fullName>
    </alternativeName>
</protein>
<proteinExistence type="evidence at transcript level"/>
<evidence type="ECO:0000250" key="1"/>
<evidence type="ECO:0000250" key="2">
    <source>
        <dbReference type="UniProtKB" id="P01215"/>
    </source>
</evidence>
<evidence type="ECO:0000305" key="3"/>
<organism>
    <name type="scientific">Capra hircus</name>
    <name type="common">Goat</name>
    <dbReference type="NCBI Taxonomy" id="9925"/>
    <lineage>
        <taxon>Eukaryota</taxon>
        <taxon>Metazoa</taxon>
        <taxon>Chordata</taxon>
        <taxon>Craniata</taxon>
        <taxon>Vertebrata</taxon>
        <taxon>Euteleostomi</taxon>
        <taxon>Mammalia</taxon>
        <taxon>Eutheria</taxon>
        <taxon>Laurasiatheria</taxon>
        <taxon>Artiodactyla</taxon>
        <taxon>Ruminantia</taxon>
        <taxon>Pecora</taxon>
        <taxon>Bovidae</taxon>
        <taxon>Caprinae</taxon>
        <taxon>Capra</taxon>
    </lineage>
</organism>
<sequence length="120" mass="13588">MDYYRKYAAVILAVLSLFLQILHSFPDGEFMMQGCPECKLKENKYFSKPDAPIYQCMGCCFSRAYPTPARSKKTMLVPKNITSEATCCVAKAFTKATVTGNVRVENHTDCHCSTCYYHKS</sequence>
<name>GLHA_CAPHI</name>
<gene>
    <name type="primary">CGA</name>
</gene>
<keyword id="KW-1015">Disulfide bond</keyword>
<keyword id="KW-0325">Glycoprotein</keyword>
<keyword id="KW-0372">Hormone</keyword>
<keyword id="KW-1185">Reference proteome</keyword>
<keyword id="KW-0964">Secreted</keyword>
<keyword id="KW-0732">Signal</keyword>
<comment type="function">
    <text evidence="2">Shared alpha chain of the active heterodimeric glycoprotein hormones thyrotropin/thyroid stimulating hormone/TSH, lutropin/luteinizing hormone/LH and follitropin/follicle stimulating hormone/FSH. These hormones bind specific receptors on target cells that in turn activate downstream signaling pathways.</text>
</comment>
<comment type="subunit">
    <text evidence="2">Heterodimer. The active hormones thyrotropin, lutropin and follitropin are heterodimers composed of CGA, a common alpha chain described here and a unique beta chain which confers their biological specificity to the hormones: TSHB for thyrotropin, LHB for lutropin and FSHB for follitropin.</text>
</comment>
<comment type="subcellular location">
    <subcellularLocation>
        <location evidence="2">Secreted</location>
    </subcellularLocation>
</comment>
<comment type="similarity">
    <text evidence="3">Belongs to the glycoprotein hormones subunit alpha family.</text>
</comment>
<reference key="1">
    <citation type="submission" date="2001-12" db="EMBL/GenBank/DDBJ databases">
        <title>Nucleotide sequence of cloned cDNA for alpha subunit of goat.</title>
        <authorList>
            <person name="Li L.Q."/>
            <person name="Zhang Z."/>
            <person name="Guan G.H."/>
        </authorList>
    </citation>
    <scope>NUCLEOTIDE SEQUENCE [MRNA]</scope>
</reference>
<feature type="signal peptide" evidence="1">
    <location>
        <begin position="1"/>
        <end position="24"/>
    </location>
</feature>
<feature type="chain" id="PRO_0000042874" description="Glycoprotein hormones alpha chain">
    <location>
        <begin position="25"/>
        <end position="120"/>
    </location>
</feature>
<feature type="glycosylation site" description="N-linked (GlcNAc...) asparagine" evidence="2">
    <location>
        <position position="80"/>
    </location>
</feature>
<feature type="glycosylation site" description="N-linked (GlcNAc...) asparagine" evidence="2">
    <location>
        <position position="106"/>
    </location>
</feature>
<feature type="disulfide bond" evidence="2">
    <location>
        <begin position="35"/>
        <end position="59"/>
    </location>
</feature>
<feature type="disulfide bond" evidence="2">
    <location>
        <begin position="38"/>
        <end position="88"/>
    </location>
</feature>
<feature type="disulfide bond" evidence="2">
    <location>
        <begin position="56"/>
        <end position="110"/>
    </location>
</feature>
<feature type="disulfide bond" evidence="2">
    <location>
        <begin position="60"/>
        <end position="112"/>
    </location>
</feature>
<feature type="disulfide bond" evidence="2">
    <location>
        <begin position="87"/>
        <end position="115"/>
    </location>
</feature>